<proteinExistence type="inferred from homology"/>
<dbReference type="EC" id="2.7.7.6" evidence="1"/>
<dbReference type="EMBL" id="DQ923117">
    <property type="protein sequence ID" value="ABI49854.1"/>
    <property type="molecule type" value="Genomic_DNA"/>
</dbReference>
<dbReference type="RefSeq" id="YP_740641.1">
    <property type="nucleotide sequence ID" value="NC_008336.1"/>
</dbReference>
<dbReference type="SMR" id="Q09FX0"/>
<dbReference type="GeneID" id="4271571"/>
<dbReference type="GO" id="GO:0009507">
    <property type="term" value="C:chloroplast"/>
    <property type="evidence" value="ECO:0007669"/>
    <property type="project" value="UniProtKB-SubCell"/>
</dbReference>
<dbReference type="GO" id="GO:0000428">
    <property type="term" value="C:DNA-directed RNA polymerase complex"/>
    <property type="evidence" value="ECO:0007669"/>
    <property type="project" value="UniProtKB-KW"/>
</dbReference>
<dbReference type="GO" id="GO:0005739">
    <property type="term" value="C:mitochondrion"/>
    <property type="evidence" value="ECO:0007669"/>
    <property type="project" value="GOC"/>
</dbReference>
<dbReference type="GO" id="GO:0003677">
    <property type="term" value="F:DNA binding"/>
    <property type="evidence" value="ECO:0007669"/>
    <property type="project" value="UniProtKB-UniRule"/>
</dbReference>
<dbReference type="GO" id="GO:0003899">
    <property type="term" value="F:DNA-directed RNA polymerase activity"/>
    <property type="evidence" value="ECO:0007669"/>
    <property type="project" value="UniProtKB-UniRule"/>
</dbReference>
<dbReference type="GO" id="GO:0000287">
    <property type="term" value="F:magnesium ion binding"/>
    <property type="evidence" value="ECO:0007669"/>
    <property type="project" value="UniProtKB-UniRule"/>
</dbReference>
<dbReference type="GO" id="GO:0008270">
    <property type="term" value="F:zinc ion binding"/>
    <property type="evidence" value="ECO:0007669"/>
    <property type="project" value="UniProtKB-UniRule"/>
</dbReference>
<dbReference type="GO" id="GO:0006351">
    <property type="term" value="P:DNA-templated transcription"/>
    <property type="evidence" value="ECO:0007669"/>
    <property type="project" value="UniProtKB-UniRule"/>
</dbReference>
<dbReference type="FunFam" id="1.10.40.90:FF:000002">
    <property type="entry name" value="DNA-directed RNA polymerase subunit"/>
    <property type="match status" value="1"/>
</dbReference>
<dbReference type="FunFam" id="4.10.860.120:FF:000007">
    <property type="entry name" value="DNA-directed RNA polymerase subunit gamma"/>
    <property type="match status" value="1"/>
</dbReference>
<dbReference type="Gene3D" id="1.10.40.90">
    <property type="match status" value="1"/>
</dbReference>
<dbReference type="Gene3D" id="2.40.40.20">
    <property type="match status" value="1"/>
</dbReference>
<dbReference type="Gene3D" id="4.10.860.120">
    <property type="entry name" value="RNA polymerase II, clamp domain"/>
    <property type="match status" value="1"/>
</dbReference>
<dbReference type="Gene3D" id="1.10.274.100">
    <property type="entry name" value="RNA polymerase Rpb1, domain 3"/>
    <property type="match status" value="1"/>
</dbReference>
<dbReference type="HAMAP" id="MF_01323">
    <property type="entry name" value="RNApol_bact_RpoC1"/>
    <property type="match status" value="1"/>
</dbReference>
<dbReference type="InterPro" id="IPR045867">
    <property type="entry name" value="DNA-dir_RpoC_beta_prime"/>
</dbReference>
<dbReference type="InterPro" id="IPR000722">
    <property type="entry name" value="RNA_pol_asu"/>
</dbReference>
<dbReference type="InterPro" id="IPR006592">
    <property type="entry name" value="RNA_pol_N"/>
</dbReference>
<dbReference type="InterPro" id="IPR007080">
    <property type="entry name" value="RNA_pol_Rpb1_1"/>
</dbReference>
<dbReference type="InterPro" id="IPR042102">
    <property type="entry name" value="RNA_pol_Rpb1_3_sf"/>
</dbReference>
<dbReference type="InterPro" id="IPR044893">
    <property type="entry name" value="RNA_pol_Rpb1_clamp_domain"/>
</dbReference>
<dbReference type="InterPro" id="IPR034678">
    <property type="entry name" value="RNApol_RpoC1"/>
</dbReference>
<dbReference type="PANTHER" id="PTHR19376">
    <property type="entry name" value="DNA-DIRECTED RNA POLYMERASE"/>
    <property type="match status" value="1"/>
</dbReference>
<dbReference type="PANTHER" id="PTHR19376:SF54">
    <property type="entry name" value="DNA-DIRECTED RNA POLYMERASE SUBUNIT BETA"/>
    <property type="match status" value="1"/>
</dbReference>
<dbReference type="Pfam" id="PF04997">
    <property type="entry name" value="RNA_pol_Rpb1_1"/>
    <property type="match status" value="1"/>
</dbReference>
<dbReference type="Pfam" id="PF00623">
    <property type="entry name" value="RNA_pol_Rpb1_2"/>
    <property type="match status" value="2"/>
</dbReference>
<dbReference type="SMART" id="SM00663">
    <property type="entry name" value="RPOLA_N"/>
    <property type="match status" value="1"/>
</dbReference>
<dbReference type="SUPFAM" id="SSF64484">
    <property type="entry name" value="beta and beta-prime subunits of DNA dependent RNA-polymerase"/>
    <property type="match status" value="1"/>
</dbReference>
<evidence type="ECO:0000255" key="1">
    <source>
        <dbReference type="HAMAP-Rule" id="MF_01323"/>
    </source>
</evidence>
<keyword id="KW-0150">Chloroplast</keyword>
<keyword id="KW-0240">DNA-directed RNA polymerase</keyword>
<keyword id="KW-0460">Magnesium</keyword>
<keyword id="KW-0479">Metal-binding</keyword>
<keyword id="KW-0548">Nucleotidyltransferase</keyword>
<keyword id="KW-0934">Plastid</keyword>
<keyword id="KW-0804">Transcription</keyword>
<keyword id="KW-0808">Transferase</keyword>
<keyword id="KW-0862">Zinc</keyword>
<geneLocation type="chloroplast"/>
<sequence length="680" mass="78215">MIDRYKHQQLRIGSVSPQQISAWAKKILPNGEMVGEVTKPYTFHYKTNKPEKDGLFCERIFGPIKSGICACGNYRVIGDKKEDPKFCEQCGVEFVDSRVRRYQMGYIKLACPVTHVWYLKRLPSYIANLLDKPLKELEGLVYCDFLFARPVAKKPTFLRLRGSFEYEIQSWKYSIPLFFTTQGFDTFRNREISTGAGAIREQLADLDLRLITDSSLVEWKELGEEGATGNEWEDRKIGRRKDFLVRRMELAKHFIRTNVEPERMVLCLLPVLPPELRPIIQIDGGKPMSSDINELYRRVIYRNNTLTDLLTTSRSTPGELVMCQEKLVQEAVDTLLDNGIRGQPMRDSHNKVYKSFSDVIEGKEGRFRETLLGKRVDYSGRSVIVVGPSLSLHRCGLPREIAIELFQTFVIRGLIRQHAASNIGVAKSKIREKEPIVWEILQEVMQGHPVLLNRAPTLHRLGIQAFQPILVEGRAIFLHPLVCKGFNADFDGDQMAVHVPLSLEAQAEARLLMFSHMNLLSPAIGDPISVPTQDMLMGLYVLTTGNHRGICANRYNPSNHRNYQNEKIDDNNYKYTKEPYFCSSYDALGAYRQKRIYLDSPLWLRWRLDQRVIASREVPIEVQYESLGTYHEIYGHYLIVRNVKKEILCIDIRTTVGHISFYREIEEAIQGFCRACSYGT</sequence>
<comment type="function">
    <text evidence="1">DNA-dependent RNA polymerase catalyzes the transcription of DNA into RNA using the four ribonucleoside triphosphates as substrates.</text>
</comment>
<comment type="catalytic activity">
    <reaction evidence="1">
        <text>RNA(n) + a ribonucleoside 5'-triphosphate = RNA(n+1) + diphosphate</text>
        <dbReference type="Rhea" id="RHEA:21248"/>
        <dbReference type="Rhea" id="RHEA-COMP:14527"/>
        <dbReference type="Rhea" id="RHEA-COMP:17342"/>
        <dbReference type="ChEBI" id="CHEBI:33019"/>
        <dbReference type="ChEBI" id="CHEBI:61557"/>
        <dbReference type="ChEBI" id="CHEBI:140395"/>
        <dbReference type="EC" id="2.7.7.6"/>
    </reaction>
</comment>
<comment type="cofactor">
    <cofactor evidence="1">
        <name>Mg(2+)</name>
        <dbReference type="ChEBI" id="CHEBI:18420"/>
    </cofactor>
    <text evidence="1">Binds 1 Mg(2+) ion per subunit.</text>
</comment>
<comment type="cofactor">
    <cofactor evidence="1">
        <name>Zn(2+)</name>
        <dbReference type="ChEBI" id="CHEBI:29105"/>
    </cofactor>
    <text evidence="1">Binds 1 Zn(2+) ion per subunit.</text>
</comment>
<comment type="subunit">
    <text evidence="1">In plastids the minimal PEP RNA polymerase catalytic core is composed of four subunits: alpha, beta, beta', and beta''. When a (nuclear-encoded) sigma factor is associated with the core the holoenzyme is formed, which can initiate transcription.</text>
</comment>
<comment type="subcellular location">
    <subcellularLocation>
        <location evidence="1">Plastid</location>
        <location evidence="1">Chloroplast</location>
    </subcellularLocation>
</comment>
<comment type="similarity">
    <text evidence="1">Belongs to the RNA polymerase beta' chain family. RpoC1 subfamily.</text>
</comment>
<organism>
    <name type="scientific">Nandina domestica</name>
    <name type="common">Heavenly bamboo</name>
    <dbReference type="NCBI Taxonomy" id="41776"/>
    <lineage>
        <taxon>Eukaryota</taxon>
        <taxon>Viridiplantae</taxon>
        <taxon>Streptophyta</taxon>
        <taxon>Embryophyta</taxon>
        <taxon>Tracheophyta</taxon>
        <taxon>Spermatophyta</taxon>
        <taxon>Magnoliopsida</taxon>
        <taxon>Ranunculales</taxon>
        <taxon>Berberidaceae</taxon>
        <taxon>Nandinoideae</taxon>
        <taxon>Nandineae</taxon>
        <taxon>Nandina</taxon>
    </lineage>
</organism>
<accession>Q09FX0</accession>
<reference key="1">
    <citation type="journal article" date="2006" name="BMC Plant Biol.">
        <title>Rapid and accurate pyrosequencing of angiosperm plastid genomes.</title>
        <authorList>
            <person name="Moore M.J."/>
            <person name="Dhingra A."/>
            <person name="Soltis P.S."/>
            <person name="Shaw R."/>
            <person name="Farmerie W.G."/>
            <person name="Folta K.M."/>
            <person name="Soltis D.E."/>
        </authorList>
    </citation>
    <scope>NUCLEOTIDE SEQUENCE [LARGE SCALE GENOMIC DNA]</scope>
</reference>
<name>RPOC1_NANDO</name>
<gene>
    <name evidence="1" type="primary">rpoC1</name>
</gene>
<feature type="chain" id="PRO_0000353500" description="DNA-directed RNA polymerase subunit beta'">
    <location>
        <begin position="1"/>
        <end position="680"/>
    </location>
</feature>
<feature type="binding site" evidence="1">
    <location>
        <position position="69"/>
    </location>
    <ligand>
        <name>Zn(2+)</name>
        <dbReference type="ChEBI" id="CHEBI:29105"/>
    </ligand>
</feature>
<feature type="binding site" evidence="1">
    <location>
        <position position="71"/>
    </location>
    <ligand>
        <name>Zn(2+)</name>
        <dbReference type="ChEBI" id="CHEBI:29105"/>
    </ligand>
</feature>
<feature type="binding site" evidence="1">
    <location>
        <position position="87"/>
    </location>
    <ligand>
        <name>Zn(2+)</name>
        <dbReference type="ChEBI" id="CHEBI:29105"/>
    </ligand>
</feature>
<feature type="binding site" evidence="1">
    <location>
        <position position="90"/>
    </location>
    <ligand>
        <name>Zn(2+)</name>
        <dbReference type="ChEBI" id="CHEBI:29105"/>
    </ligand>
</feature>
<feature type="binding site" evidence="1">
    <location>
        <position position="489"/>
    </location>
    <ligand>
        <name>Mg(2+)</name>
        <dbReference type="ChEBI" id="CHEBI:18420"/>
    </ligand>
</feature>
<feature type="binding site" evidence="1">
    <location>
        <position position="491"/>
    </location>
    <ligand>
        <name>Mg(2+)</name>
        <dbReference type="ChEBI" id="CHEBI:18420"/>
    </ligand>
</feature>
<feature type="binding site" evidence="1">
    <location>
        <position position="493"/>
    </location>
    <ligand>
        <name>Mg(2+)</name>
        <dbReference type="ChEBI" id="CHEBI:18420"/>
    </ligand>
</feature>
<protein>
    <recommendedName>
        <fullName evidence="1">DNA-directed RNA polymerase subunit beta'</fullName>
        <ecNumber evidence="1">2.7.7.6</ecNumber>
    </recommendedName>
    <alternativeName>
        <fullName evidence="1">PEP</fullName>
    </alternativeName>
    <alternativeName>
        <fullName evidence="1">Plastid-encoded RNA polymerase subunit beta'</fullName>
        <shortName evidence="1">RNA polymerase subunit beta'</shortName>
    </alternativeName>
</protein>